<name>GPDA_LIGS1</name>
<accession>Q1WV00</accession>
<keyword id="KW-0963">Cytoplasm</keyword>
<keyword id="KW-0444">Lipid biosynthesis</keyword>
<keyword id="KW-0443">Lipid metabolism</keyword>
<keyword id="KW-0520">NAD</keyword>
<keyword id="KW-0521">NADP</keyword>
<keyword id="KW-0547">Nucleotide-binding</keyword>
<keyword id="KW-0560">Oxidoreductase</keyword>
<keyword id="KW-0594">Phospholipid biosynthesis</keyword>
<keyword id="KW-1208">Phospholipid metabolism</keyword>
<keyword id="KW-1185">Reference proteome</keyword>
<proteinExistence type="inferred from homology"/>
<sequence length="338" mass="36824">MTEKIAVLGAGSWGSILAGVLDENKNEVWLWTNKESQAKELNENHTNEHYIPGHKYSETIKATTNLKEAVDGASAVLFVVPTKVIRLVAQQLVEVLKELGQKPLIIHASKGLELGSHKRISEVIEEEIPSEYRKDVVVLSGPSHAEEVARKDITLITAACENLDSAKKVQSLFMNDYLRIYTNKDVIGVETGAAFKNVIAIGVGALHGLGYGDDAKAALMTRGLAEISRLGVAFGADPLTFIGLSGVGDLIVTCTSVHSRNWRAGNQLGKGKALDEVIQDMGMVIEGINTCKAAYELAQQKNIEMPITEAIYNVLYNGKDIKDEISLLMQREGKEEIK</sequence>
<protein>
    <recommendedName>
        <fullName evidence="1">Glycerol-3-phosphate dehydrogenase [NAD(P)+]</fullName>
        <ecNumber evidence="1">1.1.1.94</ecNumber>
    </recommendedName>
    <alternativeName>
        <fullName evidence="1">NAD(P)(+)-dependent glycerol-3-phosphate dehydrogenase</fullName>
    </alternativeName>
    <alternativeName>
        <fullName evidence="1">NAD(P)H-dependent dihydroxyacetone-phosphate reductase</fullName>
    </alternativeName>
</protein>
<reference key="1">
    <citation type="journal article" date="2006" name="Proc. Natl. Acad. Sci. U.S.A.">
        <title>Multireplicon genome architecture of Lactobacillus salivarius.</title>
        <authorList>
            <person name="Claesson M.J."/>
            <person name="Li Y."/>
            <person name="Leahy S."/>
            <person name="Canchaya C."/>
            <person name="van Pijkeren J.P."/>
            <person name="Cerdeno-Tarraga A.M."/>
            <person name="Parkhill J."/>
            <person name="Flynn S."/>
            <person name="O'Sullivan G.C."/>
            <person name="Collins J.K."/>
            <person name="Higgins D."/>
            <person name="Shanahan F."/>
            <person name="Fitzgerald G.F."/>
            <person name="van Sinderen D."/>
            <person name="O'Toole P.W."/>
        </authorList>
    </citation>
    <scope>NUCLEOTIDE SEQUENCE [LARGE SCALE GENOMIC DNA]</scope>
    <source>
        <strain>UCC118</strain>
    </source>
</reference>
<dbReference type="EC" id="1.1.1.94" evidence="1"/>
<dbReference type="EMBL" id="CP000233">
    <property type="protein sequence ID" value="ABD99185.1"/>
    <property type="molecule type" value="Genomic_DNA"/>
</dbReference>
<dbReference type="RefSeq" id="WP_011475721.1">
    <property type="nucleotide sequence ID" value="NC_007929.1"/>
</dbReference>
<dbReference type="RefSeq" id="YP_535268.1">
    <property type="nucleotide sequence ID" value="NC_007929.1"/>
</dbReference>
<dbReference type="SMR" id="Q1WV00"/>
<dbReference type="STRING" id="362948.LSL_0372"/>
<dbReference type="KEGG" id="lsl:LSL_0372"/>
<dbReference type="PATRIC" id="fig|362948.14.peg.448"/>
<dbReference type="HOGENOM" id="CLU_033449_0_2_9"/>
<dbReference type="OrthoDB" id="9812273at2"/>
<dbReference type="UniPathway" id="UPA00940"/>
<dbReference type="Proteomes" id="UP000006559">
    <property type="component" value="Chromosome"/>
</dbReference>
<dbReference type="GO" id="GO:0005829">
    <property type="term" value="C:cytosol"/>
    <property type="evidence" value="ECO:0007669"/>
    <property type="project" value="TreeGrafter"/>
</dbReference>
<dbReference type="GO" id="GO:0047952">
    <property type="term" value="F:glycerol-3-phosphate dehydrogenase [NAD(P)+] activity"/>
    <property type="evidence" value="ECO:0007669"/>
    <property type="project" value="UniProtKB-UniRule"/>
</dbReference>
<dbReference type="GO" id="GO:0051287">
    <property type="term" value="F:NAD binding"/>
    <property type="evidence" value="ECO:0007669"/>
    <property type="project" value="InterPro"/>
</dbReference>
<dbReference type="GO" id="GO:0005975">
    <property type="term" value="P:carbohydrate metabolic process"/>
    <property type="evidence" value="ECO:0007669"/>
    <property type="project" value="InterPro"/>
</dbReference>
<dbReference type="GO" id="GO:0046167">
    <property type="term" value="P:glycerol-3-phosphate biosynthetic process"/>
    <property type="evidence" value="ECO:0007669"/>
    <property type="project" value="UniProtKB-UniRule"/>
</dbReference>
<dbReference type="GO" id="GO:0046168">
    <property type="term" value="P:glycerol-3-phosphate catabolic process"/>
    <property type="evidence" value="ECO:0007669"/>
    <property type="project" value="InterPro"/>
</dbReference>
<dbReference type="GO" id="GO:0006650">
    <property type="term" value="P:glycerophospholipid metabolic process"/>
    <property type="evidence" value="ECO:0007669"/>
    <property type="project" value="UniProtKB-UniRule"/>
</dbReference>
<dbReference type="GO" id="GO:0008654">
    <property type="term" value="P:phospholipid biosynthetic process"/>
    <property type="evidence" value="ECO:0007669"/>
    <property type="project" value="UniProtKB-KW"/>
</dbReference>
<dbReference type="FunFam" id="1.10.1040.10:FF:000001">
    <property type="entry name" value="Glycerol-3-phosphate dehydrogenase [NAD(P)+]"/>
    <property type="match status" value="1"/>
</dbReference>
<dbReference type="FunFam" id="3.40.50.720:FF:000019">
    <property type="entry name" value="Glycerol-3-phosphate dehydrogenase [NAD(P)+]"/>
    <property type="match status" value="1"/>
</dbReference>
<dbReference type="Gene3D" id="1.10.1040.10">
    <property type="entry name" value="N-(1-d-carboxylethyl)-l-norvaline Dehydrogenase, domain 2"/>
    <property type="match status" value="1"/>
</dbReference>
<dbReference type="Gene3D" id="3.40.50.720">
    <property type="entry name" value="NAD(P)-binding Rossmann-like Domain"/>
    <property type="match status" value="1"/>
</dbReference>
<dbReference type="HAMAP" id="MF_00394">
    <property type="entry name" value="NAD_Glyc3P_dehydrog"/>
    <property type="match status" value="1"/>
</dbReference>
<dbReference type="InterPro" id="IPR008927">
    <property type="entry name" value="6-PGluconate_DH-like_C_sf"/>
</dbReference>
<dbReference type="InterPro" id="IPR013328">
    <property type="entry name" value="6PGD_dom2"/>
</dbReference>
<dbReference type="InterPro" id="IPR006168">
    <property type="entry name" value="G3P_DH_NAD-dep"/>
</dbReference>
<dbReference type="InterPro" id="IPR006109">
    <property type="entry name" value="G3P_DH_NAD-dep_C"/>
</dbReference>
<dbReference type="InterPro" id="IPR011128">
    <property type="entry name" value="G3P_DH_NAD-dep_N"/>
</dbReference>
<dbReference type="InterPro" id="IPR036291">
    <property type="entry name" value="NAD(P)-bd_dom_sf"/>
</dbReference>
<dbReference type="NCBIfam" id="NF000940">
    <property type="entry name" value="PRK00094.1-2"/>
    <property type="match status" value="1"/>
</dbReference>
<dbReference type="NCBIfam" id="NF000941">
    <property type="entry name" value="PRK00094.1-3"/>
    <property type="match status" value="1"/>
</dbReference>
<dbReference type="NCBIfam" id="NF000942">
    <property type="entry name" value="PRK00094.1-4"/>
    <property type="match status" value="1"/>
</dbReference>
<dbReference type="PANTHER" id="PTHR11728">
    <property type="entry name" value="GLYCEROL-3-PHOSPHATE DEHYDROGENASE"/>
    <property type="match status" value="1"/>
</dbReference>
<dbReference type="PANTHER" id="PTHR11728:SF1">
    <property type="entry name" value="GLYCEROL-3-PHOSPHATE DEHYDROGENASE [NAD(+)] 2, CHLOROPLASTIC"/>
    <property type="match status" value="1"/>
</dbReference>
<dbReference type="Pfam" id="PF07479">
    <property type="entry name" value="NAD_Gly3P_dh_C"/>
    <property type="match status" value="1"/>
</dbReference>
<dbReference type="Pfam" id="PF01210">
    <property type="entry name" value="NAD_Gly3P_dh_N"/>
    <property type="match status" value="1"/>
</dbReference>
<dbReference type="PIRSF" id="PIRSF000114">
    <property type="entry name" value="Glycerol-3-P_dh"/>
    <property type="match status" value="1"/>
</dbReference>
<dbReference type="PRINTS" id="PR00077">
    <property type="entry name" value="GPDHDRGNASE"/>
</dbReference>
<dbReference type="SUPFAM" id="SSF48179">
    <property type="entry name" value="6-phosphogluconate dehydrogenase C-terminal domain-like"/>
    <property type="match status" value="1"/>
</dbReference>
<dbReference type="SUPFAM" id="SSF51735">
    <property type="entry name" value="NAD(P)-binding Rossmann-fold domains"/>
    <property type="match status" value="1"/>
</dbReference>
<dbReference type="PROSITE" id="PS00957">
    <property type="entry name" value="NAD_G3PDH"/>
    <property type="match status" value="1"/>
</dbReference>
<gene>
    <name evidence="1" type="primary">gpsA</name>
    <name type="ordered locus">LSL_0372</name>
</gene>
<evidence type="ECO:0000255" key="1">
    <source>
        <dbReference type="HAMAP-Rule" id="MF_00394"/>
    </source>
</evidence>
<comment type="function">
    <text evidence="1">Catalyzes the reduction of the glycolytic intermediate dihydroxyacetone phosphate (DHAP) to sn-glycerol 3-phosphate (G3P), the key precursor for phospholipid synthesis.</text>
</comment>
<comment type="catalytic activity">
    <reaction evidence="1">
        <text>sn-glycerol 3-phosphate + NAD(+) = dihydroxyacetone phosphate + NADH + H(+)</text>
        <dbReference type="Rhea" id="RHEA:11092"/>
        <dbReference type="ChEBI" id="CHEBI:15378"/>
        <dbReference type="ChEBI" id="CHEBI:57540"/>
        <dbReference type="ChEBI" id="CHEBI:57597"/>
        <dbReference type="ChEBI" id="CHEBI:57642"/>
        <dbReference type="ChEBI" id="CHEBI:57945"/>
        <dbReference type="EC" id="1.1.1.94"/>
    </reaction>
    <physiologicalReaction direction="right-to-left" evidence="1">
        <dbReference type="Rhea" id="RHEA:11094"/>
    </physiologicalReaction>
</comment>
<comment type="catalytic activity">
    <reaction evidence="1">
        <text>sn-glycerol 3-phosphate + NADP(+) = dihydroxyacetone phosphate + NADPH + H(+)</text>
        <dbReference type="Rhea" id="RHEA:11096"/>
        <dbReference type="ChEBI" id="CHEBI:15378"/>
        <dbReference type="ChEBI" id="CHEBI:57597"/>
        <dbReference type="ChEBI" id="CHEBI:57642"/>
        <dbReference type="ChEBI" id="CHEBI:57783"/>
        <dbReference type="ChEBI" id="CHEBI:58349"/>
        <dbReference type="EC" id="1.1.1.94"/>
    </reaction>
    <physiologicalReaction direction="right-to-left" evidence="1">
        <dbReference type="Rhea" id="RHEA:11098"/>
    </physiologicalReaction>
</comment>
<comment type="pathway">
    <text evidence="1">Membrane lipid metabolism; glycerophospholipid metabolism.</text>
</comment>
<comment type="subcellular location">
    <subcellularLocation>
        <location evidence="1">Cytoplasm</location>
    </subcellularLocation>
</comment>
<comment type="similarity">
    <text evidence="1">Belongs to the NAD-dependent glycerol-3-phosphate dehydrogenase family.</text>
</comment>
<organism>
    <name type="scientific">Ligilactobacillus salivarius (strain UCC118)</name>
    <name type="common">Lactobacillus salivarius</name>
    <dbReference type="NCBI Taxonomy" id="362948"/>
    <lineage>
        <taxon>Bacteria</taxon>
        <taxon>Bacillati</taxon>
        <taxon>Bacillota</taxon>
        <taxon>Bacilli</taxon>
        <taxon>Lactobacillales</taxon>
        <taxon>Lactobacillaceae</taxon>
        <taxon>Ligilactobacillus</taxon>
    </lineage>
</organism>
<feature type="chain" id="PRO_0000255326" description="Glycerol-3-phosphate dehydrogenase [NAD(P)+]">
    <location>
        <begin position="1"/>
        <end position="338"/>
    </location>
</feature>
<feature type="active site" description="Proton acceptor" evidence="1">
    <location>
        <position position="196"/>
    </location>
</feature>
<feature type="binding site" evidence="1">
    <location>
        <position position="12"/>
    </location>
    <ligand>
        <name>NADPH</name>
        <dbReference type="ChEBI" id="CHEBI:57783"/>
    </ligand>
</feature>
<feature type="binding site" evidence="1">
    <location>
        <position position="13"/>
    </location>
    <ligand>
        <name>NADPH</name>
        <dbReference type="ChEBI" id="CHEBI:57783"/>
    </ligand>
</feature>
<feature type="binding site" evidence="1">
    <location>
        <position position="34"/>
    </location>
    <ligand>
        <name>NADPH</name>
        <dbReference type="ChEBI" id="CHEBI:57783"/>
    </ligand>
</feature>
<feature type="binding site" evidence="1">
    <location>
        <position position="110"/>
    </location>
    <ligand>
        <name>NADPH</name>
        <dbReference type="ChEBI" id="CHEBI:57783"/>
    </ligand>
</feature>
<feature type="binding site" evidence="1">
    <location>
        <position position="110"/>
    </location>
    <ligand>
        <name>sn-glycerol 3-phosphate</name>
        <dbReference type="ChEBI" id="CHEBI:57597"/>
    </ligand>
</feature>
<feature type="binding site" evidence="1">
    <location>
        <position position="141"/>
    </location>
    <ligand>
        <name>sn-glycerol 3-phosphate</name>
        <dbReference type="ChEBI" id="CHEBI:57597"/>
    </ligand>
</feature>
<feature type="binding site" evidence="1">
    <location>
        <position position="143"/>
    </location>
    <ligand>
        <name>sn-glycerol 3-phosphate</name>
        <dbReference type="ChEBI" id="CHEBI:57597"/>
    </ligand>
</feature>
<feature type="binding site" evidence="1">
    <location>
        <position position="145"/>
    </location>
    <ligand>
        <name>NADPH</name>
        <dbReference type="ChEBI" id="CHEBI:57783"/>
    </ligand>
</feature>
<feature type="binding site" evidence="1">
    <location>
        <position position="196"/>
    </location>
    <ligand>
        <name>sn-glycerol 3-phosphate</name>
        <dbReference type="ChEBI" id="CHEBI:57597"/>
    </ligand>
</feature>
<feature type="binding site" evidence="1">
    <location>
        <position position="249"/>
    </location>
    <ligand>
        <name>sn-glycerol 3-phosphate</name>
        <dbReference type="ChEBI" id="CHEBI:57597"/>
    </ligand>
</feature>
<feature type="binding site" evidence="1">
    <location>
        <position position="259"/>
    </location>
    <ligand>
        <name>sn-glycerol 3-phosphate</name>
        <dbReference type="ChEBI" id="CHEBI:57597"/>
    </ligand>
</feature>
<feature type="binding site" evidence="1">
    <location>
        <position position="260"/>
    </location>
    <ligand>
        <name>NADPH</name>
        <dbReference type="ChEBI" id="CHEBI:57783"/>
    </ligand>
</feature>
<feature type="binding site" evidence="1">
    <location>
        <position position="260"/>
    </location>
    <ligand>
        <name>sn-glycerol 3-phosphate</name>
        <dbReference type="ChEBI" id="CHEBI:57597"/>
    </ligand>
</feature>
<feature type="binding site" evidence="1">
    <location>
        <position position="261"/>
    </location>
    <ligand>
        <name>sn-glycerol 3-phosphate</name>
        <dbReference type="ChEBI" id="CHEBI:57597"/>
    </ligand>
</feature>
<feature type="binding site" evidence="1">
    <location>
        <position position="284"/>
    </location>
    <ligand>
        <name>NADPH</name>
        <dbReference type="ChEBI" id="CHEBI:57783"/>
    </ligand>
</feature>
<feature type="binding site" evidence="1">
    <location>
        <position position="286"/>
    </location>
    <ligand>
        <name>NADPH</name>
        <dbReference type="ChEBI" id="CHEBI:57783"/>
    </ligand>
</feature>